<organism>
    <name type="scientific">Thermoproteus tenax virus 1 (strain KRA1)</name>
    <name type="common">TTV1</name>
    <dbReference type="NCBI Taxonomy" id="10480"/>
    <lineage>
        <taxon>Viruses</taxon>
        <taxon>Adnaviria</taxon>
        <taxon>Zilligvirae</taxon>
        <taxon>Taleaviricota</taxon>
        <taxon>Tokiviricetes</taxon>
        <taxon>Primavirales</taxon>
        <taxon>Tristromaviridae</taxon>
        <taxon>Betatristromavirus</taxon>
        <taxon>Betatristromavirus TTV1</taxon>
    </lineage>
</organism>
<proteinExistence type="predicted"/>
<sequence length="70" mass="8125">MKAKEVIEILEIIIYIVVVPSLIVYYVSHNTVYVAITVTLTLNLARKTYSTKKKIEKMMKKVEKALEFFS</sequence>
<dbReference type="EMBL" id="X14855">
    <property type="protein sequence ID" value="CAA32979.1"/>
    <property type="molecule type" value="Genomic_DNA"/>
</dbReference>
<dbReference type="SMR" id="P19285"/>
<dbReference type="Proteomes" id="UP000009250">
    <property type="component" value="Genome"/>
</dbReference>
<protein>
    <recommendedName>
        <fullName>Uncharacterized 8.1 kDa protein</fullName>
    </recommendedName>
</protein>
<keyword id="KW-1185">Reference proteome</keyword>
<name>YORA_TTV1K</name>
<accession>P19285</accession>
<organismHost>
    <name type="scientific">Thermoproteus tenax</name>
    <dbReference type="NCBI Taxonomy" id="2271"/>
</organismHost>
<feature type="chain" id="PRO_0000222967" description="Uncharacterized 8.1 kDa protein">
    <location>
        <begin position="1"/>
        <end position="70"/>
    </location>
</feature>
<reference key="1">
    <citation type="submission" date="1989-03" db="EMBL/GenBank/DDBJ databases">
        <authorList>
            <person name="Neumann H."/>
        </authorList>
    </citation>
    <scope>NUCLEOTIDE SEQUENCE [GENOMIC DNA]</scope>
</reference>